<accession>A3DIF3</accession>
<comment type="catalytic activity">
    <reaction evidence="1">
        <text>(S)-4-amino-5-oxopentanoate = 5-aminolevulinate</text>
        <dbReference type="Rhea" id="RHEA:14265"/>
        <dbReference type="ChEBI" id="CHEBI:57501"/>
        <dbReference type="ChEBI" id="CHEBI:356416"/>
        <dbReference type="EC" id="5.4.3.8"/>
    </reaction>
</comment>
<comment type="cofactor">
    <cofactor evidence="1">
        <name>pyridoxal 5'-phosphate</name>
        <dbReference type="ChEBI" id="CHEBI:597326"/>
    </cofactor>
</comment>
<comment type="pathway">
    <text evidence="1">Porphyrin-containing compound metabolism; protoporphyrin-IX biosynthesis; 5-aminolevulinate from L-glutamyl-tRNA(Glu): step 2/2.</text>
</comment>
<comment type="subunit">
    <text evidence="1">Homodimer.</text>
</comment>
<comment type="subcellular location">
    <subcellularLocation>
        <location evidence="1">Cytoplasm</location>
    </subcellularLocation>
</comment>
<comment type="similarity">
    <text evidence="1">Belongs to the class-III pyridoxal-phosphate-dependent aminotransferase family. HemL subfamily.</text>
</comment>
<keyword id="KW-0963">Cytoplasm</keyword>
<keyword id="KW-0413">Isomerase</keyword>
<keyword id="KW-0627">Porphyrin biosynthesis</keyword>
<keyword id="KW-0663">Pyridoxal phosphate</keyword>
<keyword id="KW-1185">Reference proteome</keyword>
<reference key="1">
    <citation type="submission" date="2007-02" db="EMBL/GenBank/DDBJ databases">
        <title>Complete sequence of Clostridium thermocellum ATCC 27405.</title>
        <authorList>
            <consortium name="US DOE Joint Genome Institute"/>
            <person name="Copeland A."/>
            <person name="Lucas S."/>
            <person name="Lapidus A."/>
            <person name="Barry K."/>
            <person name="Detter J.C."/>
            <person name="Glavina del Rio T."/>
            <person name="Hammon N."/>
            <person name="Israni S."/>
            <person name="Dalin E."/>
            <person name="Tice H."/>
            <person name="Pitluck S."/>
            <person name="Chertkov O."/>
            <person name="Brettin T."/>
            <person name="Bruce D."/>
            <person name="Han C."/>
            <person name="Tapia R."/>
            <person name="Gilna P."/>
            <person name="Schmutz J."/>
            <person name="Larimer F."/>
            <person name="Land M."/>
            <person name="Hauser L."/>
            <person name="Kyrpides N."/>
            <person name="Mikhailova N."/>
            <person name="Wu J.H.D."/>
            <person name="Newcomb M."/>
            <person name="Richardson P."/>
        </authorList>
    </citation>
    <scope>NUCLEOTIDE SEQUENCE [LARGE SCALE GENOMIC DNA]</scope>
    <source>
        <strain>ATCC 27405 / DSM 1237 / JCM 9322 / NBRC 103400 / NCIMB 10682 / NRRL B-4536 / VPI 7372</strain>
    </source>
</reference>
<evidence type="ECO:0000255" key="1">
    <source>
        <dbReference type="HAMAP-Rule" id="MF_00375"/>
    </source>
</evidence>
<sequence length="427" mass="45932">MTLSKSKLLFERAKKVIPGGVNSPVRAFGAVGGYPPFIKKAKGARIYDADGNEYIDYVGSWGPMILGHSHPRVLEAVSKTMVDGLSFGAATELEVQMAELITELVPSVEMVRMVNSGTEAVMSAIRVARGYTKREKIIKFAGCYHGHADSMLVKVGSGAMTNGIPNSGGVTAGAAKDTLIARYNDIDSVKLLFEQNKGNIAAVIVEPVAANMGVVPPKDNFLEELRKLCDKEEALLIFDEVITGFRLAIGGAQQYFGVNADLVTYGKIIGGGMPVGAYGGRREIMECVAPVGDVYQAGTLSGNPIAMSAGIATLRELYENPGIFENINRLGQRLSEGLGKITKYTVKAVGSLVCVFMTEEEVNDYDSAVKSDTGLFGRYFNHLLNNGIYIAPSQFEAMFVSNAHTDKDIDETLEKVSLFFARKSPPA</sequence>
<feature type="chain" id="PRO_1000059984" description="Glutamate-1-semialdehyde 2,1-aminomutase">
    <location>
        <begin position="1"/>
        <end position="427"/>
    </location>
</feature>
<feature type="modified residue" description="N6-(pyridoxal phosphate)lysine" evidence="1">
    <location>
        <position position="267"/>
    </location>
</feature>
<organism>
    <name type="scientific">Acetivibrio thermocellus (strain ATCC 27405 / DSM 1237 / JCM 9322 / NBRC 103400 / NCIMB 10682 / NRRL B-4536 / VPI 7372)</name>
    <name type="common">Clostridium thermocellum</name>
    <dbReference type="NCBI Taxonomy" id="203119"/>
    <lineage>
        <taxon>Bacteria</taxon>
        <taxon>Bacillati</taxon>
        <taxon>Bacillota</taxon>
        <taxon>Clostridia</taxon>
        <taxon>Eubacteriales</taxon>
        <taxon>Oscillospiraceae</taxon>
        <taxon>Acetivibrio</taxon>
    </lineage>
</organism>
<dbReference type="EC" id="5.4.3.8" evidence="1"/>
<dbReference type="EMBL" id="CP000568">
    <property type="protein sequence ID" value="ABN53732.1"/>
    <property type="molecule type" value="Genomic_DNA"/>
</dbReference>
<dbReference type="RefSeq" id="WP_003513104.1">
    <property type="nucleotide sequence ID" value="NC_009012.1"/>
</dbReference>
<dbReference type="SMR" id="A3DIF3"/>
<dbReference type="STRING" id="203119.Cthe_2530"/>
<dbReference type="GeneID" id="35803579"/>
<dbReference type="KEGG" id="cth:Cthe_2530"/>
<dbReference type="eggNOG" id="COG0001">
    <property type="taxonomic scope" value="Bacteria"/>
</dbReference>
<dbReference type="HOGENOM" id="CLU_016922_1_5_9"/>
<dbReference type="OrthoDB" id="9807885at2"/>
<dbReference type="UniPathway" id="UPA00251">
    <property type="reaction ID" value="UER00317"/>
</dbReference>
<dbReference type="Proteomes" id="UP000002145">
    <property type="component" value="Chromosome"/>
</dbReference>
<dbReference type="GO" id="GO:0005737">
    <property type="term" value="C:cytoplasm"/>
    <property type="evidence" value="ECO:0007669"/>
    <property type="project" value="UniProtKB-SubCell"/>
</dbReference>
<dbReference type="GO" id="GO:0042286">
    <property type="term" value="F:glutamate-1-semialdehyde 2,1-aminomutase activity"/>
    <property type="evidence" value="ECO:0007669"/>
    <property type="project" value="UniProtKB-UniRule"/>
</dbReference>
<dbReference type="GO" id="GO:0030170">
    <property type="term" value="F:pyridoxal phosphate binding"/>
    <property type="evidence" value="ECO:0007669"/>
    <property type="project" value="InterPro"/>
</dbReference>
<dbReference type="GO" id="GO:0008483">
    <property type="term" value="F:transaminase activity"/>
    <property type="evidence" value="ECO:0007669"/>
    <property type="project" value="InterPro"/>
</dbReference>
<dbReference type="GO" id="GO:0006782">
    <property type="term" value="P:protoporphyrinogen IX biosynthetic process"/>
    <property type="evidence" value="ECO:0007669"/>
    <property type="project" value="UniProtKB-UniRule"/>
</dbReference>
<dbReference type="CDD" id="cd00610">
    <property type="entry name" value="OAT_like"/>
    <property type="match status" value="1"/>
</dbReference>
<dbReference type="FunFam" id="3.40.640.10:FF:000021">
    <property type="entry name" value="Glutamate-1-semialdehyde 2,1-aminomutase"/>
    <property type="match status" value="1"/>
</dbReference>
<dbReference type="Gene3D" id="3.90.1150.10">
    <property type="entry name" value="Aspartate Aminotransferase, domain 1"/>
    <property type="match status" value="1"/>
</dbReference>
<dbReference type="Gene3D" id="3.40.640.10">
    <property type="entry name" value="Type I PLP-dependent aspartate aminotransferase-like (Major domain)"/>
    <property type="match status" value="1"/>
</dbReference>
<dbReference type="HAMAP" id="MF_00375">
    <property type="entry name" value="HemL_aminotrans_3"/>
    <property type="match status" value="1"/>
</dbReference>
<dbReference type="InterPro" id="IPR004639">
    <property type="entry name" value="4pyrrol_synth_GluAld_NH2Trfase"/>
</dbReference>
<dbReference type="InterPro" id="IPR005814">
    <property type="entry name" value="Aminotrans_3"/>
</dbReference>
<dbReference type="InterPro" id="IPR049704">
    <property type="entry name" value="Aminotrans_3_PPA_site"/>
</dbReference>
<dbReference type="InterPro" id="IPR015424">
    <property type="entry name" value="PyrdxlP-dep_Trfase"/>
</dbReference>
<dbReference type="InterPro" id="IPR015421">
    <property type="entry name" value="PyrdxlP-dep_Trfase_major"/>
</dbReference>
<dbReference type="InterPro" id="IPR015422">
    <property type="entry name" value="PyrdxlP-dep_Trfase_small"/>
</dbReference>
<dbReference type="NCBIfam" id="TIGR00713">
    <property type="entry name" value="hemL"/>
    <property type="match status" value="1"/>
</dbReference>
<dbReference type="NCBIfam" id="NF000818">
    <property type="entry name" value="PRK00062.1"/>
    <property type="match status" value="1"/>
</dbReference>
<dbReference type="PANTHER" id="PTHR43713">
    <property type="entry name" value="GLUTAMATE-1-SEMIALDEHYDE 2,1-AMINOMUTASE"/>
    <property type="match status" value="1"/>
</dbReference>
<dbReference type="PANTHER" id="PTHR43713:SF3">
    <property type="entry name" value="GLUTAMATE-1-SEMIALDEHYDE 2,1-AMINOMUTASE 1, CHLOROPLASTIC-RELATED"/>
    <property type="match status" value="1"/>
</dbReference>
<dbReference type="Pfam" id="PF00202">
    <property type="entry name" value="Aminotran_3"/>
    <property type="match status" value="1"/>
</dbReference>
<dbReference type="SUPFAM" id="SSF53383">
    <property type="entry name" value="PLP-dependent transferases"/>
    <property type="match status" value="1"/>
</dbReference>
<dbReference type="PROSITE" id="PS00600">
    <property type="entry name" value="AA_TRANSFER_CLASS_3"/>
    <property type="match status" value="1"/>
</dbReference>
<name>GSA_ACET2</name>
<protein>
    <recommendedName>
        <fullName evidence="1">Glutamate-1-semialdehyde 2,1-aminomutase</fullName>
        <shortName evidence="1">GSA</shortName>
        <ecNumber evidence="1">5.4.3.8</ecNumber>
    </recommendedName>
    <alternativeName>
        <fullName evidence="1">Glutamate-1-semialdehyde aminotransferase</fullName>
        <shortName evidence="1">GSA-AT</shortName>
    </alternativeName>
</protein>
<gene>
    <name evidence="1" type="primary">hemL</name>
    <name type="ordered locus">Cthe_2530</name>
</gene>
<proteinExistence type="inferred from homology"/>